<protein>
    <recommendedName>
        <fullName evidence="1">Large ribosomal subunit protein uL16c</fullName>
    </recommendedName>
    <alternativeName>
        <fullName evidence="3">50S ribosomal protein L16, chloroplastic</fullName>
    </alternativeName>
</protein>
<geneLocation type="chloroplast"/>
<gene>
    <name evidence="1" type="primary">rpl16</name>
</gene>
<accession>Q70XX3</accession>
<proteinExistence type="inferred from homology"/>
<comment type="subunit">
    <text evidence="1">Part of the 50S ribosomal subunit.</text>
</comment>
<comment type="subcellular location">
    <subcellularLocation>
        <location>Plastid</location>
        <location>Chloroplast</location>
    </subcellularLocation>
</comment>
<comment type="similarity">
    <text evidence="1">Belongs to the universal ribosomal protein uL16 family.</text>
</comment>
<organism>
    <name type="scientific">Amborella trichopoda</name>
    <dbReference type="NCBI Taxonomy" id="13333"/>
    <lineage>
        <taxon>Eukaryota</taxon>
        <taxon>Viridiplantae</taxon>
        <taxon>Streptophyta</taxon>
        <taxon>Embryophyta</taxon>
        <taxon>Tracheophyta</taxon>
        <taxon>Spermatophyta</taxon>
        <taxon>Magnoliopsida</taxon>
        <taxon>Amborellales</taxon>
        <taxon>Amborellaceae</taxon>
        <taxon>Amborella</taxon>
    </lineage>
</organism>
<evidence type="ECO:0000255" key="1">
    <source>
        <dbReference type="HAMAP-Rule" id="MF_01342"/>
    </source>
</evidence>
<evidence type="ECO:0000256" key="2">
    <source>
        <dbReference type="SAM" id="MobiDB-lite"/>
    </source>
</evidence>
<evidence type="ECO:0000305" key="3"/>
<reference key="1">
    <citation type="journal article" date="2003" name="Mol. Biol. Evol.">
        <title>Analysis of the Amborella trichopoda chloroplast genome sequence suggests that Amborella is not a basal angiosperm.</title>
        <authorList>
            <person name="Goremykin V.V."/>
            <person name="Hirsch-Ernst K.I."/>
            <person name="Wolfl S."/>
            <person name="Hellwig F.H."/>
        </authorList>
    </citation>
    <scope>NUCLEOTIDE SEQUENCE [LARGE SCALE GENOMIC DNA]</scope>
</reference>
<sequence length="135" mass="15279">MLSPKRTRFRKQHRGRMKGVSSRGNHICFGRYALQALEPAWITSRQIEAGRRAMTRYARRGGKIWVRVFPDKPITVRPAETRMGSGKGSPEYWVSVIKPGRILHEMGGVPETVARAAMEIAACKMPIRTQFISAK</sequence>
<name>RK16_AMBTC</name>
<dbReference type="EMBL" id="AJ506156">
    <property type="protein sequence ID" value="CAD45144.1"/>
    <property type="molecule type" value="Genomic_DNA"/>
</dbReference>
<dbReference type="RefSeq" id="NP_904136.1">
    <property type="nucleotide sequence ID" value="NC_005086.1"/>
</dbReference>
<dbReference type="SMR" id="Q70XX3"/>
<dbReference type="STRING" id="13333.Q70XX3"/>
<dbReference type="GeneID" id="2546577"/>
<dbReference type="KEGG" id="atr:2546577"/>
<dbReference type="eggNOG" id="KOG3422">
    <property type="taxonomic scope" value="Eukaryota"/>
</dbReference>
<dbReference type="OrthoDB" id="34872at2759"/>
<dbReference type="Proteomes" id="UP000017836">
    <property type="component" value="Chloroplast"/>
</dbReference>
<dbReference type="GO" id="GO:0009507">
    <property type="term" value="C:chloroplast"/>
    <property type="evidence" value="ECO:0007669"/>
    <property type="project" value="UniProtKB-SubCell"/>
</dbReference>
<dbReference type="GO" id="GO:0005762">
    <property type="term" value="C:mitochondrial large ribosomal subunit"/>
    <property type="evidence" value="ECO:0000318"/>
    <property type="project" value="GO_Central"/>
</dbReference>
<dbReference type="GO" id="GO:0019843">
    <property type="term" value="F:rRNA binding"/>
    <property type="evidence" value="ECO:0000318"/>
    <property type="project" value="GO_Central"/>
</dbReference>
<dbReference type="GO" id="GO:0003735">
    <property type="term" value="F:structural constituent of ribosome"/>
    <property type="evidence" value="ECO:0000318"/>
    <property type="project" value="GO_Central"/>
</dbReference>
<dbReference type="GO" id="GO:0032543">
    <property type="term" value="P:mitochondrial translation"/>
    <property type="evidence" value="ECO:0000318"/>
    <property type="project" value="GO_Central"/>
</dbReference>
<dbReference type="CDD" id="cd01433">
    <property type="entry name" value="Ribosomal_L16_L10e"/>
    <property type="match status" value="1"/>
</dbReference>
<dbReference type="FunFam" id="3.90.1170.10:FF:000001">
    <property type="entry name" value="50S ribosomal protein L16"/>
    <property type="match status" value="1"/>
</dbReference>
<dbReference type="Gene3D" id="3.90.1170.10">
    <property type="entry name" value="Ribosomal protein L10e/L16"/>
    <property type="match status" value="1"/>
</dbReference>
<dbReference type="HAMAP" id="MF_01342">
    <property type="entry name" value="Ribosomal_uL16"/>
    <property type="match status" value="1"/>
</dbReference>
<dbReference type="InterPro" id="IPR047873">
    <property type="entry name" value="Ribosomal_uL16"/>
</dbReference>
<dbReference type="InterPro" id="IPR000114">
    <property type="entry name" value="Ribosomal_uL16_bact-type"/>
</dbReference>
<dbReference type="InterPro" id="IPR020798">
    <property type="entry name" value="Ribosomal_uL16_CS"/>
</dbReference>
<dbReference type="InterPro" id="IPR016180">
    <property type="entry name" value="Ribosomal_uL16_dom"/>
</dbReference>
<dbReference type="InterPro" id="IPR036920">
    <property type="entry name" value="Ribosomal_uL16_sf"/>
</dbReference>
<dbReference type="NCBIfam" id="TIGR01164">
    <property type="entry name" value="rplP_bact"/>
    <property type="match status" value="1"/>
</dbReference>
<dbReference type="PANTHER" id="PTHR12220">
    <property type="entry name" value="50S/60S RIBOSOMAL PROTEIN L16"/>
    <property type="match status" value="1"/>
</dbReference>
<dbReference type="PANTHER" id="PTHR12220:SF13">
    <property type="entry name" value="LARGE RIBOSOMAL SUBUNIT PROTEIN UL16M"/>
    <property type="match status" value="1"/>
</dbReference>
<dbReference type="Pfam" id="PF00252">
    <property type="entry name" value="Ribosomal_L16"/>
    <property type="match status" value="1"/>
</dbReference>
<dbReference type="PRINTS" id="PR00060">
    <property type="entry name" value="RIBOSOMALL16"/>
</dbReference>
<dbReference type="SUPFAM" id="SSF54686">
    <property type="entry name" value="Ribosomal protein L16p/L10e"/>
    <property type="match status" value="1"/>
</dbReference>
<dbReference type="PROSITE" id="PS00586">
    <property type="entry name" value="RIBOSOMAL_L16_1"/>
    <property type="match status" value="1"/>
</dbReference>
<dbReference type="PROSITE" id="PS00701">
    <property type="entry name" value="RIBOSOMAL_L16_2"/>
    <property type="match status" value="1"/>
</dbReference>
<feature type="chain" id="PRO_0000062266" description="Large ribosomal subunit protein uL16c">
    <location>
        <begin position="1"/>
        <end position="135"/>
    </location>
</feature>
<feature type="region of interest" description="Disordered" evidence="2">
    <location>
        <begin position="1"/>
        <end position="21"/>
    </location>
</feature>
<feature type="compositionally biased region" description="Basic residues" evidence="2">
    <location>
        <begin position="1"/>
        <end position="17"/>
    </location>
</feature>
<keyword id="KW-0150">Chloroplast</keyword>
<keyword id="KW-0934">Plastid</keyword>
<keyword id="KW-1185">Reference proteome</keyword>
<keyword id="KW-0687">Ribonucleoprotein</keyword>
<keyword id="KW-0689">Ribosomal protein</keyword>